<protein>
    <recommendedName>
        <fullName evidence="1">Chorismate synthase</fullName>
        <shortName evidence="1">CS</shortName>
        <ecNumber evidence="1">4.2.3.5</ecNumber>
    </recommendedName>
    <alternativeName>
        <fullName evidence="1">5-enolpyruvylshikimate-3-phosphate phospholyase</fullName>
    </alternativeName>
</protein>
<reference key="1">
    <citation type="submission" date="2006-10" db="EMBL/GenBank/DDBJ databases">
        <title>Complete sequence of chromosome of Pelobacter propionicus DSM 2379.</title>
        <authorList>
            <consortium name="US DOE Joint Genome Institute"/>
            <person name="Copeland A."/>
            <person name="Lucas S."/>
            <person name="Lapidus A."/>
            <person name="Barry K."/>
            <person name="Detter J.C."/>
            <person name="Glavina del Rio T."/>
            <person name="Hammon N."/>
            <person name="Israni S."/>
            <person name="Dalin E."/>
            <person name="Tice H."/>
            <person name="Pitluck S."/>
            <person name="Saunders E."/>
            <person name="Brettin T."/>
            <person name="Bruce D."/>
            <person name="Han C."/>
            <person name="Tapia R."/>
            <person name="Schmutz J."/>
            <person name="Larimer F."/>
            <person name="Land M."/>
            <person name="Hauser L."/>
            <person name="Kyrpides N."/>
            <person name="Kim E."/>
            <person name="Lovley D."/>
            <person name="Richardson P."/>
        </authorList>
    </citation>
    <scope>NUCLEOTIDE SEQUENCE [LARGE SCALE GENOMIC DNA]</scope>
    <source>
        <strain>DSM 2379 / NBRC 103807 / OttBd1</strain>
    </source>
</reference>
<feature type="chain" id="PRO_1000071973" description="Chorismate synthase">
    <location>
        <begin position="1"/>
        <end position="393"/>
    </location>
</feature>
<feature type="binding site" evidence="1">
    <location>
        <position position="40"/>
    </location>
    <ligand>
        <name>NADP(+)</name>
        <dbReference type="ChEBI" id="CHEBI:58349"/>
    </ligand>
</feature>
<feature type="binding site" evidence="1">
    <location>
        <position position="46"/>
    </location>
    <ligand>
        <name>NADP(+)</name>
        <dbReference type="ChEBI" id="CHEBI:58349"/>
    </ligand>
</feature>
<feature type="binding site" evidence="1">
    <location>
        <begin position="129"/>
        <end position="131"/>
    </location>
    <ligand>
        <name>FMN</name>
        <dbReference type="ChEBI" id="CHEBI:58210"/>
    </ligand>
</feature>
<feature type="binding site" evidence="1">
    <location>
        <begin position="249"/>
        <end position="250"/>
    </location>
    <ligand>
        <name>FMN</name>
        <dbReference type="ChEBI" id="CHEBI:58210"/>
    </ligand>
</feature>
<feature type="binding site" evidence="1">
    <location>
        <position position="301"/>
    </location>
    <ligand>
        <name>FMN</name>
        <dbReference type="ChEBI" id="CHEBI:58210"/>
    </ligand>
</feature>
<feature type="binding site" evidence="1">
    <location>
        <begin position="316"/>
        <end position="320"/>
    </location>
    <ligand>
        <name>FMN</name>
        <dbReference type="ChEBI" id="CHEBI:58210"/>
    </ligand>
</feature>
<feature type="binding site" evidence="1">
    <location>
        <position position="342"/>
    </location>
    <ligand>
        <name>FMN</name>
        <dbReference type="ChEBI" id="CHEBI:58210"/>
    </ligand>
</feature>
<dbReference type="EC" id="4.2.3.5" evidence="1"/>
<dbReference type="EMBL" id="CP000482">
    <property type="protein sequence ID" value="ABK99636.1"/>
    <property type="molecule type" value="Genomic_DNA"/>
</dbReference>
<dbReference type="RefSeq" id="WP_011735902.1">
    <property type="nucleotide sequence ID" value="NC_008609.1"/>
</dbReference>
<dbReference type="SMR" id="A1AQL6"/>
<dbReference type="STRING" id="338966.Ppro_2028"/>
<dbReference type="KEGG" id="ppd:Ppro_2028"/>
<dbReference type="eggNOG" id="COG0082">
    <property type="taxonomic scope" value="Bacteria"/>
</dbReference>
<dbReference type="HOGENOM" id="CLU_034547_2_0_7"/>
<dbReference type="OrthoDB" id="9771806at2"/>
<dbReference type="UniPathway" id="UPA00053">
    <property type="reaction ID" value="UER00090"/>
</dbReference>
<dbReference type="Proteomes" id="UP000006732">
    <property type="component" value="Chromosome"/>
</dbReference>
<dbReference type="GO" id="GO:0005829">
    <property type="term" value="C:cytosol"/>
    <property type="evidence" value="ECO:0007669"/>
    <property type="project" value="TreeGrafter"/>
</dbReference>
<dbReference type="GO" id="GO:0004107">
    <property type="term" value="F:chorismate synthase activity"/>
    <property type="evidence" value="ECO:0007669"/>
    <property type="project" value="UniProtKB-UniRule"/>
</dbReference>
<dbReference type="GO" id="GO:0010181">
    <property type="term" value="F:FMN binding"/>
    <property type="evidence" value="ECO:0007669"/>
    <property type="project" value="TreeGrafter"/>
</dbReference>
<dbReference type="GO" id="GO:0008652">
    <property type="term" value="P:amino acid biosynthetic process"/>
    <property type="evidence" value="ECO:0007669"/>
    <property type="project" value="UniProtKB-KW"/>
</dbReference>
<dbReference type="GO" id="GO:0009073">
    <property type="term" value="P:aromatic amino acid family biosynthetic process"/>
    <property type="evidence" value="ECO:0007669"/>
    <property type="project" value="UniProtKB-KW"/>
</dbReference>
<dbReference type="GO" id="GO:0009423">
    <property type="term" value="P:chorismate biosynthetic process"/>
    <property type="evidence" value="ECO:0007669"/>
    <property type="project" value="UniProtKB-UniRule"/>
</dbReference>
<dbReference type="CDD" id="cd07304">
    <property type="entry name" value="Chorismate_synthase"/>
    <property type="match status" value="1"/>
</dbReference>
<dbReference type="FunFam" id="3.60.150.10:FF:000002">
    <property type="entry name" value="Chorismate synthase"/>
    <property type="match status" value="1"/>
</dbReference>
<dbReference type="Gene3D" id="3.60.150.10">
    <property type="entry name" value="Chorismate synthase AroC"/>
    <property type="match status" value="1"/>
</dbReference>
<dbReference type="HAMAP" id="MF_00300">
    <property type="entry name" value="Chorismate_synth"/>
    <property type="match status" value="1"/>
</dbReference>
<dbReference type="InterPro" id="IPR000453">
    <property type="entry name" value="Chorismate_synth"/>
</dbReference>
<dbReference type="InterPro" id="IPR035904">
    <property type="entry name" value="Chorismate_synth_AroC_sf"/>
</dbReference>
<dbReference type="InterPro" id="IPR020541">
    <property type="entry name" value="Chorismate_synthase_CS"/>
</dbReference>
<dbReference type="NCBIfam" id="TIGR00033">
    <property type="entry name" value="aroC"/>
    <property type="match status" value="1"/>
</dbReference>
<dbReference type="NCBIfam" id="NF003793">
    <property type="entry name" value="PRK05382.1"/>
    <property type="match status" value="1"/>
</dbReference>
<dbReference type="PANTHER" id="PTHR21085">
    <property type="entry name" value="CHORISMATE SYNTHASE"/>
    <property type="match status" value="1"/>
</dbReference>
<dbReference type="PANTHER" id="PTHR21085:SF0">
    <property type="entry name" value="CHORISMATE SYNTHASE"/>
    <property type="match status" value="1"/>
</dbReference>
<dbReference type="Pfam" id="PF01264">
    <property type="entry name" value="Chorismate_synt"/>
    <property type="match status" value="1"/>
</dbReference>
<dbReference type="PIRSF" id="PIRSF001456">
    <property type="entry name" value="Chorismate_synth"/>
    <property type="match status" value="1"/>
</dbReference>
<dbReference type="SUPFAM" id="SSF103263">
    <property type="entry name" value="Chorismate synthase, AroC"/>
    <property type="match status" value="1"/>
</dbReference>
<dbReference type="PROSITE" id="PS00787">
    <property type="entry name" value="CHORISMATE_SYNTHASE_1"/>
    <property type="match status" value="1"/>
</dbReference>
<proteinExistence type="inferred from homology"/>
<keyword id="KW-0028">Amino-acid biosynthesis</keyword>
<keyword id="KW-0057">Aromatic amino acid biosynthesis</keyword>
<keyword id="KW-0274">FAD</keyword>
<keyword id="KW-0285">Flavoprotein</keyword>
<keyword id="KW-0288">FMN</keyword>
<keyword id="KW-0456">Lyase</keyword>
<keyword id="KW-0521">NADP</keyword>
<keyword id="KW-1185">Reference proteome</keyword>
<accession>A1AQL6</accession>
<comment type="function">
    <text evidence="1">Catalyzes the anti-1,4-elimination of the C-3 phosphate and the C-6 proR hydrogen from 5-enolpyruvylshikimate-3-phosphate (EPSP) to yield chorismate, which is the branch point compound that serves as the starting substrate for the three terminal pathways of aromatic amino acid biosynthesis. This reaction introduces a second double bond into the aromatic ring system.</text>
</comment>
<comment type="catalytic activity">
    <reaction evidence="1">
        <text>5-O-(1-carboxyvinyl)-3-phosphoshikimate = chorismate + phosphate</text>
        <dbReference type="Rhea" id="RHEA:21020"/>
        <dbReference type="ChEBI" id="CHEBI:29748"/>
        <dbReference type="ChEBI" id="CHEBI:43474"/>
        <dbReference type="ChEBI" id="CHEBI:57701"/>
        <dbReference type="EC" id="4.2.3.5"/>
    </reaction>
</comment>
<comment type="cofactor">
    <cofactor evidence="1">
        <name>FMNH2</name>
        <dbReference type="ChEBI" id="CHEBI:57618"/>
    </cofactor>
    <text evidence="1">Reduced FMN (FMNH(2)).</text>
</comment>
<comment type="pathway">
    <text evidence="1">Metabolic intermediate biosynthesis; chorismate biosynthesis; chorismate from D-erythrose 4-phosphate and phosphoenolpyruvate: step 7/7.</text>
</comment>
<comment type="subunit">
    <text evidence="1">Homotetramer.</text>
</comment>
<comment type="similarity">
    <text evidence="1">Belongs to the chorismate synthase family.</text>
</comment>
<evidence type="ECO:0000255" key="1">
    <source>
        <dbReference type="HAMAP-Rule" id="MF_00300"/>
    </source>
</evidence>
<name>AROC_PELPD</name>
<sequence length="393" mass="42380">MLRYLTAGESHGPQLTAIIEGMPAGVPLLAEDINRELARRQQGYGRGDRMKIEKDQVEILSGVRWGETLASPLTLVVKNRDWENWSTKMSSLPEFRDESQAVTRPRPGHADLGGALKYGHRDLRNILERSSARETAVRVAVGAAAKALLRLFGIRVGGVVREVGGVVATDPAASFEYIWASAGQSPLFCCDGAAEQEMKRLIDDAKGSGDTLGGVVEVQVIGVPPGLGSHVQWDRKLDARLAMALMSIQAIKGVEVGIGFETARRPGSQVHDEIFRDAARTGADSGGAYYRTSNNAGGIEGGMSNGEAIILRAAMKPIPTLYKPLRSVDMLTHEPFQAAVERSDTCAVPAALVVAEAVVAVEIANAFLEKFGGDSVQEIRRNYQGYCERIRTL</sequence>
<gene>
    <name evidence="1" type="primary">aroC</name>
    <name type="ordered locus">Ppro_2028</name>
</gene>
<organism>
    <name type="scientific">Pelobacter propionicus (strain DSM 2379 / NBRC 103807 / OttBd1)</name>
    <dbReference type="NCBI Taxonomy" id="338966"/>
    <lineage>
        <taxon>Bacteria</taxon>
        <taxon>Pseudomonadati</taxon>
        <taxon>Thermodesulfobacteriota</taxon>
        <taxon>Desulfuromonadia</taxon>
        <taxon>Desulfuromonadales</taxon>
        <taxon>Desulfuromonadaceae</taxon>
        <taxon>Pelobacter</taxon>
    </lineage>
</organism>